<name>CEL2A_MOUSE</name>
<gene>
    <name evidence="7" type="primary">Cela2a</name>
    <name type="synonym">Ela-2</name>
    <name type="synonym">Ela2</name>
    <name type="synonym">Ela2a</name>
</gene>
<feature type="signal peptide">
    <location>
        <begin position="1"/>
        <end position="16"/>
    </location>
</feature>
<feature type="propeptide" id="PRO_0000027687" description="Activation peptide">
    <location>
        <begin position="17"/>
        <end position="30"/>
    </location>
</feature>
<feature type="chain" id="PRO_0000027688" description="Chymotrypsin-like elastase family member 2A">
    <location>
        <begin position="31"/>
        <end position="271"/>
    </location>
</feature>
<feature type="domain" description="Peptidase S1" evidence="3">
    <location>
        <begin position="31"/>
        <end position="269"/>
    </location>
</feature>
<feature type="active site" description="Charge relay system" evidence="1">
    <location>
        <position position="75"/>
    </location>
</feature>
<feature type="active site" description="Charge relay system" evidence="1">
    <location>
        <position position="123"/>
    </location>
</feature>
<feature type="active site" description="Charge relay system" evidence="1">
    <location>
        <position position="218"/>
    </location>
</feature>
<feature type="disulfide bond" evidence="3">
    <location>
        <begin position="60"/>
        <end position="76"/>
    </location>
</feature>
<feature type="disulfide bond" evidence="3">
    <location>
        <begin position="157"/>
        <end position="224"/>
    </location>
</feature>
<feature type="disulfide bond" evidence="3">
    <location>
        <begin position="188"/>
        <end position="204"/>
    </location>
</feature>
<feature type="disulfide bond" evidence="3">
    <location>
        <begin position="214"/>
        <end position="245"/>
    </location>
</feature>
<evidence type="ECO:0000250" key="1"/>
<evidence type="ECO:0000250" key="2">
    <source>
        <dbReference type="UniProtKB" id="P08217"/>
    </source>
</evidence>
<evidence type="ECO:0000255" key="3">
    <source>
        <dbReference type="PROSITE-ProRule" id="PRU00274"/>
    </source>
</evidence>
<evidence type="ECO:0000269" key="4">
    <source>
    </source>
</evidence>
<evidence type="ECO:0000305" key="5"/>
<evidence type="ECO:0000305" key="6">
    <source>
    </source>
</evidence>
<evidence type="ECO:0000312" key="7">
    <source>
        <dbReference type="MGI" id="MGI:95316"/>
    </source>
</evidence>
<comment type="function">
    <text evidence="4">Elastase that enhances insulin signaling and might have a physiologic role in cellular glucose metabolism. Circulates in plasma and reduces platelet hyperactivation, triggers both insulin secretion and degradation, and increases insulin sensitivity.</text>
</comment>
<comment type="catalytic activity">
    <reaction evidence="6">
        <text>Preferential cleavage: Leu-|-Xaa, Met-|-Xaa and Phe-|-Xaa. Hydrolyzes elastin.</text>
        <dbReference type="EC" id="3.4.21.71"/>
    </reaction>
</comment>
<comment type="subunit">
    <text evidence="2">Interacts with CPA1. Interacts with SERPINA1.</text>
</comment>
<comment type="subcellular location">
    <subcellularLocation>
        <location evidence="6">Secreted</location>
    </subcellularLocation>
</comment>
<comment type="tissue specificity">
    <text evidence="4">Highly expressed in pancreas (at mRNA and protein levels). Also expressed in adrenal gland and small intestine.</text>
</comment>
<comment type="similarity">
    <text evidence="3">Belongs to the peptidase S1 family. Elastase subfamily.</text>
</comment>
<dbReference type="EC" id="3.4.21.71"/>
<dbReference type="EMBL" id="X04573">
    <property type="protein sequence ID" value="CAA28242.1"/>
    <property type="molecule type" value="mRNA"/>
</dbReference>
<dbReference type="EMBL" id="X04576">
    <property type="protein sequence ID" value="CAA28244.1"/>
    <property type="molecule type" value="Genomic_DNA"/>
</dbReference>
<dbReference type="EMBL" id="BC026552">
    <property type="protein sequence ID" value="AAH26552.1"/>
    <property type="molecule type" value="mRNA"/>
</dbReference>
<dbReference type="CCDS" id="CCDS18884.1"/>
<dbReference type="PIR" id="A25528">
    <property type="entry name" value="A25528"/>
</dbReference>
<dbReference type="RefSeq" id="NP_031945.1">
    <property type="nucleotide sequence ID" value="NM_007919.3"/>
</dbReference>
<dbReference type="SMR" id="P05208"/>
<dbReference type="FunCoup" id="P05208">
    <property type="interactions" value="218"/>
</dbReference>
<dbReference type="STRING" id="10090.ENSMUSP00000099539"/>
<dbReference type="MEROPS" id="S01.155"/>
<dbReference type="PhosphoSitePlus" id="P05208"/>
<dbReference type="jPOST" id="P05208"/>
<dbReference type="PaxDb" id="10090-ENSMUSP00000099539"/>
<dbReference type="PeptideAtlas" id="P05208"/>
<dbReference type="ProteomicsDB" id="281571"/>
<dbReference type="DNASU" id="13706"/>
<dbReference type="Ensembl" id="ENSMUST00000102481.4">
    <property type="protein sequence ID" value="ENSMUSP00000099539.4"/>
    <property type="gene ID" value="ENSMUSG00000058579.6"/>
</dbReference>
<dbReference type="GeneID" id="13706"/>
<dbReference type="KEGG" id="mmu:13706"/>
<dbReference type="UCSC" id="uc008vpj.1">
    <property type="organism name" value="mouse"/>
</dbReference>
<dbReference type="AGR" id="MGI:95316"/>
<dbReference type="CTD" id="63036"/>
<dbReference type="MGI" id="MGI:95316">
    <property type="gene designation" value="Cela2a"/>
</dbReference>
<dbReference type="VEuPathDB" id="HostDB:ENSMUSG00000058579"/>
<dbReference type="eggNOG" id="KOG3627">
    <property type="taxonomic scope" value="Eukaryota"/>
</dbReference>
<dbReference type="GeneTree" id="ENSGT01030000234528"/>
<dbReference type="HOGENOM" id="CLU_006842_0_4_1"/>
<dbReference type="InParanoid" id="P05208"/>
<dbReference type="OMA" id="GWGQTCP"/>
<dbReference type="OrthoDB" id="10061449at2759"/>
<dbReference type="PhylomeDB" id="P05208"/>
<dbReference type="TreeFam" id="TF330455"/>
<dbReference type="Reactome" id="R-MMU-6809371">
    <property type="pathway name" value="Formation of the cornified envelope"/>
</dbReference>
<dbReference type="BioGRID-ORCS" id="13706">
    <property type="hits" value="2 hits in 78 CRISPR screens"/>
</dbReference>
<dbReference type="ChiTaRS" id="Cela2a">
    <property type="organism name" value="mouse"/>
</dbReference>
<dbReference type="PRO" id="PR:P05208"/>
<dbReference type="Proteomes" id="UP000000589">
    <property type="component" value="Chromosome 4"/>
</dbReference>
<dbReference type="RNAct" id="P05208">
    <property type="molecule type" value="protein"/>
</dbReference>
<dbReference type="Bgee" id="ENSMUSG00000058579">
    <property type="expression patterns" value="Expressed in pyloric antrum and 45 other cell types or tissues"/>
</dbReference>
<dbReference type="GO" id="GO:0062023">
    <property type="term" value="C:collagen-containing extracellular matrix"/>
    <property type="evidence" value="ECO:0007005"/>
    <property type="project" value="BHF-UCL"/>
</dbReference>
<dbReference type="GO" id="GO:0005576">
    <property type="term" value="C:extracellular region"/>
    <property type="evidence" value="ECO:0000250"/>
    <property type="project" value="UniProtKB"/>
</dbReference>
<dbReference type="GO" id="GO:0036457">
    <property type="term" value="C:keratohyalin granule"/>
    <property type="evidence" value="ECO:0000266"/>
    <property type="project" value="MGI"/>
</dbReference>
<dbReference type="GO" id="GO:0004175">
    <property type="term" value="F:endopeptidase activity"/>
    <property type="evidence" value="ECO:0000250"/>
    <property type="project" value="UniProtKB"/>
</dbReference>
<dbReference type="GO" id="GO:0017171">
    <property type="term" value="F:serine hydrolase activity"/>
    <property type="evidence" value="ECO:0000314"/>
    <property type="project" value="MGI"/>
</dbReference>
<dbReference type="GO" id="GO:0004252">
    <property type="term" value="F:serine-type endopeptidase activity"/>
    <property type="evidence" value="ECO:0007669"/>
    <property type="project" value="UniProtKB-EC"/>
</dbReference>
<dbReference type="GO" id="GO:0061436">
    <property type="term" value="P:establishment of skin barrier"/>
    <property type="evidence" value="ECO:0000315"/>
    <property type="project" value="MGI"/>
</dbReference>
<dbReference type="GO" id="GO:1901143">
    <property type="term" value="P:insulin catabolic process"/>
    <property type="evidence" value="ECO:0000250"/>
    <property type="project" value="UniProtKB"/>
</dbReference>
<dbReference type="GO" id="GO:0006508">
    <property type="term" value="P:proteolysis"/>
    <property type="evidence" value="ECO:0000315"/>
    <property type="project" value="MGI"/>
</dbReference>
<dbReference type="GO" id="GO:0050796">
    <property type="term" value="P:regulation of insulin secretion"/>
    <property type="evidence" value="ECO:0000250"/>
    <property type="project" value="UniProtKB"/>
</dbReference>
<dbReference type="GO" id="GO:0090330">
    <property type="term" value="P:regulation of platelet aggregation"/>
    <property type="evidence" value="ECO:0000250"/>
    <property type="project" value="UniProtKB"/>
</dbReference>
<dbReference type="GO" id="GO:0032868">
    <property type="term" value="P:response to insulin"/>
    <property type="evidence" value="ECO:0000250"/>
    <property type="project" value="UniProtKB"/>
</dbReference>
<dbReference type="CDD" id="cd00190">
    <property type="entry name" value="Tryp_SPc"/>
    <property type="match status" value="1"/>
</dbReference>
<dbReference type="FunFam" id="2.40.10.10:FF:000280">
    <property type="match status" value="1"/>
</dbReference>
<dbReference type="FunFam" id="2.40.10.10:FF:000004">
    <property type="entry name" value="Tryptase gamma 1"/>
    <property type="match status" value="1"/>
</dbReference>
<dbReference type="Gene3D" id="2.40.10.10">
    <property type="entry name" value="Trypsin-like serine proteases"/>
    <property type="match status" value="2"/>
</dbReference>
<dbReference type="InterPro" id="IPR050850">
    <property type="entry name" value="Peptidase_S1_Elastase_sf"/>
</dbReference>
<dbReference type="InterPro" id="IPR009003">
    <property type="entry name" value="Peptidase_S1_PA"/>
</dbReference>
<dbReference type="InterPro" id="IPR043504">
    <property type="entry name" value="Peptidase_S1_PA_chymotrypsin"/>
</dbReference>
<dbReference type="InterPro" id="IPR001314">
    <property type="entry name" value="Peptidase_S1A"/>
</dbReference>
<dbReference type="InterPro" id="IPR001254">
    <property type="entry name" value="Trypsin_dom"/>
</dbReference>
<dbReference type="InterPro" id="IPR018114">
    <property type="entry name" value="TRYPSIN_HIS"/>
</dbReference>
<dbReference type="InterPro" id="IPR033116">
    <property type="entry name" value="TRYPSIN_SER"/>
</dbReference>
<dbReference type="PANTHER" id="PTHR24257">
    <property type="entry name" value="CHYMOTRYPSIN-LIKE ELASTASE FAMILY MEMBER"/>
    <property type="match status" value="1"/>
</dbReference>
<dbReference type="PANTHER" id="PTHR24257:SF19">
    <property type="entry name" value="CHYMOTRYPSIN-LIKE ELASTASE FAMILY MEMBER 2B"/>
    <property type="match status" value="1"/>
</dbReference>
<dbReference type="Pfam" id="PF00089">
    <property type="entry name" value="Trypsin"/>
    <property type="match status" value="1"/>
</dbReference>
<dbReference type="PRINTS" id="PR00722">
    <property type="entry name" value="CHYMOTRYPSIN"/>
</dbReference>
<dbReference type="SMART" id="SM00020">
    <property type="entry name" value="Tryp_SPc"/>
    <property type="match status" value="1"/>
</dbReference>
<dbReference type="SUPFAM" id="SSF50494">
    <property type="entry name" value="Trypsin-like serine proteases"/>
    <property type="match status" value="1"/>
</dbReference>
<dbReference type="PROSITE" id="PS50240">
    <property type="entry name" value="TRYPSIN_DOM"/>
    <property type="match status" value="1"/>
</dbReference>
<dbReference type="PROSITE" id="PS00134">
    <property type="entry name" value="TRYPSIN_HIS"/>
    <property type="match status" value="1"/>
</dbReference>
<dbReference type="PROSITE" id="PS00135">
    <property type="entry name" value="TRYPSIN_SER"/>
    <property type="match status" value="1"/>
</dbReference>
<proteinExistence type="evidence at protein level"/>
<organism>
    <name type="scientific">Mus musculus</name>
    <name type="common">Mouse</name>
    <dbReference type="NCBI Taxonomy" id="10090"/>
    <lineage>
        <taxon>Eukaryota</taxon>
        <taxon>Metazoa</taxon>
        <taxon>Chordata</taxon>
        <taxon>Craniata</taxon>
        <taxon>Vertebrata</taxon>
        <taxon>Euteleostomi</taxon>
        <taxon>Mammalia</taxon>
        <taxon>Eutheria</taxon>
        <taxon>Euarchontoglires</taxon>
        <taxon>Glires</taxon>
        <taxon>Rodentia</taxon>
        <taxon>Myomorpha</taxon>
        <taxon>Muroidea</taxon>
        <taxon>Muridae</taxon>
        <taxon>Murinae</taxon>
        <taxon>Mus</taxon>
        <taxon>Mus</taxon>
    </lineage>
</organism>
<sequence>MIRTLLLSALVAGALSCGYPTYEVEDDVSRVVGGQEATPNTWPWQVSLQVLSSGRWRHNCGGSLVANNWVLTAAHCLSNYQTYRVLLGAHSLSNPGAGSAAVQVSKLVVHQRWNSQNVGNGYDIALIKLASPVTLSKNIQTACLPPAGTILPRNYVCYVTGWGLLQTNGNSPDTLRQGRLLVVDYATCSSASWWGSSVKSSMVCAGGDGVTSSCNGDSGGPLNCRASNGQWQVHGIVSFGSSLGCNYPRKPSVFTRVSNYIDWINSVMARN</sequence>
<accession>P05208</accession>
<protein>
    <recommendedName>
        <fullName evidence="5">Chymotrypsin-like elastase family member 2A</fullName>
        <ecNumber>3.4.21.71</ecNumber>
    </recommendedName>
    <alternativeName>
        <fullName>Elastase-2</fullName>
    </alternativeName>
    <alternativeName>
        <fullName>Elastase-2A</fullName>
    </alternativeName>
</protein>
<reference key="1">
    <citation type="journal article" date="1986" name="Nucleic Acids Res.">
        <title>Sequence organisation and transcriptional regulation of the mouse elastase II and trypsin genes.</title>
        <authorList>
            <person name="Stevenson B.J."/>
            <person name="Hagenbuechle O."/>
            <person name="Wellauer P.K."/>
        </authorList>
    </citation>
    <scope>NUCLEOTIDE SEQUENCE [GENOMIC DNA / MRNA]</scope>
</reference>
<reference key="2">
    <citation type="journal article" date="2004" name="Genome Res.">
        <title>The status, quality, and expansion of the NIH full-length cDNA project: the Mammalian Gene Collection (MGC).</title>
        <authorList>
            <consortium name="The MGC Project Team"/>
        </authorList>
    </citation>
    <scope>NUCLEOTIDE SEQUENCE [LARGE SCALE MRNA]</scope>
    <source>
        <strain>FVB/N</strain>
        <tissue>Colon</tissue>
    </source>
</reference>
<reference key="3">
    <citation type="journal article" date="2010" name="Cell">
        <title>A tissue-specific atlas of mouse protein phosphorylation and expression.</title>
        <authorList>
            <person name="Huttlin E.L."/>
            <person name="Jedrychowski M.P."/>
            <person name="Elias J.E."/>
            <person name="Goswami T."/>
            <person name="Rad R."/>
            <person name="Beausoleil S.A."/>
            <person name="Villen J."/>
            <person name="Haas W."/>
            <person name="Sowa M.E."/>
            <person name="Gygi S.P."/>
        </authorList>
    </citation>
    <scope>IDENTIFICATION BY MASS SPECTROMETRY [LARGE SCALE ANALYSIS]</scope>
    <source>
        <tissue>Liver</tissue>
        <tissue>Lung</tissue>
        <tissue>Pancreas</tissue>
        <tissue>Spleen</tissue>
    </source>
</reference>
<reference key="4">
    <citation type="journal article" date="2019" name="Nat. Genet.">
        <title>CELA2A mutations predispose to early-onset atherosclerosis and metabolic syndrome and affect plasma insulin and platelet activation.</title>
        <authorList>
            <person name="Esteghamat F."/>
            <person name="Broughton J.S."/>
            <person name="Smith E."/>
            <person name="Cardone R."/>
            <person name="Tyagi T."/>
            <person name="Guerra M."/>
            <person name="Szabo A."/>
            <person name="Ugwu N."/>
            <person name="Mani M.V."/>
            <person name="Azari B."/>
            <person name="Kayingo G."/>
            <person name="Chung S."/>
            <person name="Fathzadeh M."/>
            <person name="Weiss E."/>
            <person name="Bender J."/>
            <person name="Mane S."/>
            <person name="Lifton R.P."/>
            <person name="Adeniran A."/>
            <person name="Nathanson M.H."/>
            <person name="Gorelick F.S."/>
            <person name="Hwa J."/>
            <person name="Sahin-Toth M."/>
            <person name="Belfort-DeAguiar R."/>
            <person name="Kibbey R.G."/>
            <person name="Mani A."/>
        </authorList>
    </citation>
    <scope>TISSUE SPECIFICITY</scope>
    <scope>FUNCTION</scope>
    <scope>SUBCELLULAR LOCATION</scope>
    <scope>CATALYTIC ACTIVITY</scope>
</reference>
<keyword id="KW-1015">Disulfide bond</keyword>
<keyword id="KW-0378">Hydrolase</keyword>
<keyword id="KW-0645">Protease</keyword>
<keyword id="KW-1185">Reference proteome</keyword>
<keyword id="KW-0964">Secreted</keyword>
<keyword id="KW-0720">Serine protease</keyword>
<keyword id="KW-0732">Signal</keyword>
<keyword id="KW-0865">Zymogen</keyword>